<reference key="1">
    <citation type="journal article" date="2002" name="Proc. Natl. Acad. Sci. U.S.A.">
        <title>The complete genome of hyperthermophile Methanopyrus kandleri AV19 and monophyly of archaeal methanogens.</title>
        <authorList>
            <person name="Slesarev A.I."/>
            <person name="Mezhevaya K.V."/>
            <person name="Makarova K.S."/>
            <person name="Polushin N.N."/>
            <person name="Shcherbinina O.V."/>
            <person name="Shakhova V.V."/>
            <person name="Belova G.I."/>
            <person name="Aravind L."/>
            <person name="Natale D.A."/>
            <person name="Rogozin I.B."/>
            <person name="Tatusov R.L."/>
            <person name="Wolf Y.I."/>
            <person name="Stetter K.O."/>
            <person name="Malykh A.G."/>
            <person name="Koonin E.V."/>
            <person name="Kozyavkin S.A."/>
        </authorList>
    </citation>
    <scope>NUCLEOTIDE SEQUENCE [LARGE SCALE GENOMIC DNA]</scope>
    <source>
        <strain>AV19 / DSM 6324 / JCM 9639 / NBRC 100938</strain>
    </source>
</reference>
<reference key="2">
    <citation type="journal article" date="1995" name="J. Bacteriol.">
        <title>Cloning, sequencing, and growth phase-dependent transcription of the coenzyme F420-dependent N5,N10-methylenetetrahydromethanopterin reductase-encoding genes from Methanobacterium thermoautotrophicum delta H and Methanopyrus kandleri.</title>
        <authorList>
            <person name="Noelling J."/>
            <person name="Pihl T.D."/>
            <person name="Reeve J.N."/>
        </authorList>
    </citation>
    <scope>NUCLEOTIDE SEQUENCE [GENOMIC DNA] OF 1-172</scope>
</reference>
<name>Y525_METKA</name>
<sequence>MRSVSVGEVARRDVITGSPTETAVEIAYKMREHGIGSVVIVNEKDEPIGIITERDLVIKVVSQGKNPDEVIARDIMSQPVITVEEDMEVNEAVKLMVDKGIRRLPIVDDNGKLIGIVTMQDILQVEPYLVATIEEEMKKFQEELEELEEVSEIIEGVCDLCETYSEELRFVDGVWVCPECYEDILGREIEDRELEE</sequence>
<gene>
    <name type="ordered locus">MK0525</name>
</gene>
<accession>P50100</accession>
<feature type="chain" id="PRO_0000106973" description="Uncharacterized protein MK0525">
    <location>
        <begin position="1"/>
        <end position="196"/>
    </location>
</feature>
<feature type="domain" description="CBS 1" evidence="1">
    <location>
        <begin position="10"/>
        <end position="69"/>
    </location>
</feature>
<feature type="domain" description="CBS 2" evidence="1">
    <location>
        <begin position="76"/>
        <end position="132"/>
    </location>
</feature>
<feature type="domain" description="ACP-type MB" evidence="2">
    <location>
        <begin position="153"/>
        <end position="187"/>
    </location>
</feature>
<feature type="binding site" evidence="2">
    <location>
        <position position="158"/>
    </location>
    <ligand>
        <name>Fe cation</name>
        <dbReference type="ChEBI" id="CHEBI:24875"/>
    </ligand>
</feature>
<feature type="binding site" evidence="2">
    <location>
        <position position="158"/>
    </location>
    <ligand>
        <name>Zn(2+)</name>
        <dbReference type="ChEBI" id="CHEBI:29105"/>
    </ligand>
</feature>
<feature type="binding site" evidence="2">
    <location>
        <position position="161"/>
    </location>
    <ligand>
        <name>Fe cation</name>
        <dbReference type="ChEBI" id="CHEBI:24875"/>
    </ligand>
</feature>
<feature type="binding site" evidence="2">
    <location>
        <position position="161"/>
    </location>
    <ligand>
        <name>Zn(2+)</name>
        <dbReference type="ChEBI" id="CHEBI:29105"/>
    </ligand>
</feature>
<feature type="binding site" evidence="2">
    <location>
        <position position="177"/>
    </location>
    <ligand>
        <name>Fe cation</name>
        <dbReference type="ChEBI" id="CHEBI:24875"/>
    </ligand>
</feature>
<feature type="binding site" evidence="2">
    <location>
        <position position="177"/>
    </location>
    <ligand>
        <name>Zn(2+)</name>
        <dbReference type="ChEBI" id="CHEBI:29105"/>
    </ligand>
</feature>
<feature type="binding site" evidence="2">
    <location>
        <position position="180"/>
    </location>
    <ligand>
        <name>Fe cation</name>
        <dbReference type="ChEBI" id="CHEBI:24875"/>
    </ligand>
</feature>
<feature type="binding site" evidence="2">
    <location>
        <position position="180"/>
    </location>
    <ligand>
        <name>Zn(2+)</name>
        <dbReference type="ChEBI" id="CHEBI:29105"/>
    </ligand>
</feature>
<feature type="sequence conflict" description="In Ref. 2; AAA92086." evidence="3" ref="2">
    <original>S</original>
    <variation>T</variation>
    <location>
        <position position="3"/>
    </location>
</feature>
<organism>
    <name type="scientific">Methanopyrus kandleri (strain AV19 / DSM 6324 / JCM 9639 / NBRC 100938)</name>
    <dbReference type="NCBI Taxonomy" id="190192"/>
    <lineage>
        <taxon>Archaea</taxon>
        <taxon>Methanobacteriati</taxon>
        <taxon>Methanobacteriota</taxon>
        <taxon>Methanomada group</taxon>
        <taxon>Methanopyri</taxon>
        <taxon>Methanopyrales</taxon>
        <taxon>Methanopyraceae</taxon>
        <taxon>Methanopyrus</taxon>
    </lineage>
</organism>
<keyword id="KW-0129">CBS domain</keyword>
<keyword id="KW-0408">Iron</keyword>
<keyword id="KW-0479">Metal-binding</keyword>
<keyword id="KW-1185">Reference proteome</keyword>
<keyword id="KW-0677">Repeat</keyword>
<keyword id="KW-0862">Zinc</keyword>
<dbReference type="EMBL" id="AE009439">
    <property type="protein sequence ID" value="AAM01740.1"/>
    <property type="molecule type" value="Genomic_DNA"/>
</dbReference>
<dbReference type="EMBL" id="U31567">
    <property type="protein sequence ID" value="AAA92086.1"/>
    <property type="molecule type" value="Genomic_DNA"/>
</dbReference>
<dbReference type="RefSeq" id="WP_011018895.1">
    <property type="nucleotide sequence ID" value="NC_003551.1"/>
</dbReference>
<dbReference type="SMR" id="P50100"/>
<dbReference type="STRING" id="190192.MK0525"/>
<dbReference type="PaxDb" id="190192-MK0525"/>
<dbReference type="EnsemblBacteria" id="AAM01740">
    <property type="protein sequence ID" value="AAM01740"/>
    <property type="gene ID" value="MK0525"/>
</dbReference>
<dbReference type="GeneID" id="1476626"/>
<dbReference type="KEGG" id="mka:MK0525"/>
<dbReference type="PATRIC" id="fig|190192.8.peg.559"/>
<dbReference type="HOGENOM" id="CLU_040681_7_0_2"/>
<dbReference type="InParanoid" id="P50100"/>
<dbReference type="Proteomes" id="UP000001826">
    <property type="component" value="Chromosome"/>
</dbReference>
<dbReference type="GO" id="GO:0046872">
    <property type="term" value="F:metal ion binding"/>
    <property type="evidence" value="ECO:0007669"/>
    <property type="project" value="UniProtKB-KW"/>
</dbReference>
<dbReference type="CDD" id="cd17775">
    <property type="entry name" value="CBS_pair_bact_arch"/>
    <property type="match status" value="1"/>
</dbReference>
<dbReference type="Gene3D" id="3.10.580.10">
    <property type="entry name" value="CBS-domain"/>
    <property type="match status" value="1"/>
</dbReference>
<dbReference type="InterPro" id="IPR044065">
    <property type="entry name" value="ACP_MB"/>
</dbReference>
<dbReference type="InterPro" id="IPR000644">
    <property type="entry name" value="CBS_dom"/>
</dbReference>
<dbReference type="InterPro" id="IPR046342">
    <property type="entry name" value="CBS_dom_sf"/>
</dbReference>
<dbReference type="InterPro" id="IPR051257">
    <property type="entry name" value="Diverse_CBS-Domain"/>
</dbReference>
<dbReference type="PANTHER" id="PTHR43080:SF2">
    <property type="entry name" value="CBS DOMAIN-CONTAINING PROTEIN"/>
    <property type="match status" value="1"/>
</dbReference>
<dbReference type="PANTHER" id="PTHR43080">
    <property type="entry name" value="CBS DOMAIN-CONTAINING PROTEIN CBSX3, MITOCHONDRIAL"/>
    <property type="match status" value="1"/>
</dbReference>
<dbReference type="Pfam" id="PF00571">
    <property type="entry name" value="CBS"/>
    <property type="match status" value="2"/>
</dbReference>
<dbReference type="SMART" id="SM00116">
    <property type="entry name" value="CBS"/>
    <property type="match status" value="2"/>
</dbReference>
<dbReference type="SUPFAM" id="SSF54631">
    <property type="entry name" value="CBS-domain pair"/>
    <property type="match status" value="1"/>
</dbReference>
<dbReference type="PROSITE" id="PS51901">
    <property type="entry name" value="ACP_MB"/>
    <property type="match status" value="1"/>
</dbReference>
<dbReference type="PROSITE" id="PS51371">
    <property type="entry name" value="CBS"/>
    <property type="match status" value="2"/>
</dbReference>
<protein>
    <recommendedName>
        <fullName>Uncharacterized protein MK0525</fullName>
    </recommendedName>
    <alternativeName>
        <fullName>OrfX</fullName>
    </alternativeName>
</protein>
<proteinExistence type="predicted"/>
<evidence type="ECO:0000255" key="1">
    <source>
        <dbReference type="PROSITE-ProRule" id="PRU00703"/>
    </source>
</evidence>
<evidence type="ECO:0000255" key="2">
    <source>
        <dbReference type="PROSITE-ProRule" id="PRU01249"/>
    </source>
</evidence>
<evidence type="ECO:0000305" key="3"/>